<accession>O18559</accession>
<comment type="function">
    <text>Component of the virus occlusion bodies, which are large proteinaceous structures, that protect the virus from the outside environment for extended periods until they are ingested by insect larvae.</text>
</comment>
<comment type="similarity">
    <text evidence="1">Belongs to the polyhedrin family.</text>
</comment>
<dbReference type="EMBL" id="AF439352">
    <property type="protein sequence ID" value="AAC69544.1"/>
    <property type="molecule type" value="Genomic_DNA"/>
</dbReference>
<dbReference type="SMR" id="O18559"/>
<dbReference type="Proteomes" id="UP000242976">
    <property type="component" value="Genome"/>
</dbReference>
<dbReference type="GO" id="GO:0039679">
    <property type="term" value="C:viral occlusion body"/>
    <property type="evidence" value="ECO:0007669"/>
    <property type="project" value="UniProtKB-KW"/>
</dbReference>
<dbReference type="GO" id="GO:0005198">
    <property type="term" value="F:structural molecule activity"/>
    <property type="evidence" value="ECO:0007669"/>
    <property type="project" value="InterPro"/>
</dbReference>
<dbReference type="InterPro" id="IPR001746">
    <property type="entry name" value="Polyhedrin"/>
</dbReference>
<dbReference type="Pfam" id="PF00738">
    <property type="entry name" value="Polyhedrin"/>
    <property type="match status" value="1"/>
</dbReference>
<sequence>MGYNKALRYSRHDGTSCVIDNHHLKSLGSVLNDVRHKKDRIREAEYEPILDIANQYMVTEDPFRGPGKNVRITLFKEIRRVQPDTMKLVCNWSGKEFLRETWTRFISEEFPITTDQEIMDLWFEIQLRPMQPNRCYKFTMQYALGANPEYVAHDVIRQQDPYYVGPNNMERINLSKKGFAFPLTCLQSVYNDNFERFFDDILWPYFHRPLVYVGTTSAEIEEIMIEVSLLFKIKEFAPDVPLFTGPAY</sequence>
<reference key="1">
    <citation type="journal article" date="1997" name="Arch. Virol.">
        <title>Identification and sequence analyses of the granulin gene of Choristoneura fumiferana granulovirus.</title>
        <authorList>
            <person name="Bah A."/>
            <person name="Bergeron J."/>
            <person name="Arella M."/>
            <person name="Lucarotti C.J."/>
            <person name="Guertin C."/>
        </authorList>
    </citation>
    <scope>NUCLEOTIDE SEQUENCE [GENOMIC DNA]</scope>
</reference>
<organismHost>
    <name type="scientific">Choristoneura fumiferana</name>
    <name type="common">Spruce budworm moth</name>
    <name type="synonym">Archips fumiferana</name>
    <dbReference type="NCBI Taxonomy" id="7141"/>
</organismHost>
<organism>
    <name type="scientific">Choristoneura fumiferana granulovirus</name>
    <name type="common">CfGV</name>
    <dbReference type="NCBI Taxonomy" id="56947"/>
    <lineage>
        <taxon>Viruses</taxon>
        <taxon>Viruses incertae sedis</taxon>
        <taxon>Naldaviricetes</taxon>
        <taxon>Lefavirales</taxon>
        <taxon>Baculoviridae</taxon>
        <taxon>Betabaculovirus</taxon>
        <taxon>Betabaculovirus chofumiferanae</taxon>
    </lineage>
</organism>
<feature type="chain" id="PRO_0000217262" description="Granulin">
    <location>
        <begin position="1"/>
        <end position="248"/>
    </location>
</feature>
<name>GRAN_GVCF</name>
<evidence type="ECO:0000305" key="1"/>
<proteinExistence type="inferred from homology"/>
<protein>
    <recommendedName>
        <fullName>Granulin</fullName>
    </recommendedName>
    <alternativeName>
        <fullName>Matrix protein</fullName>
    </alternativeName>
</protein>
<keyword id="KW-1185">Reference proteome</keyword>
<keyword id="KW-0842">Viral occlusion body</keyword>